<keyword id="KW-0963">Cytoplasm</keyword>
<keyword id="KW-0255">Endonuclease</keyword>
<keyword id="KW-0378">Hydrolase</keyword>
<keyword id="KW-0460">Magnesium</keyword>
<keyword id="KW-0479">Metal-binding</keyword>
<keyword id="KW-0540">Nuclease</keyword>
<reference key="1">
    <citation type="submission" date="2009-02" db="EMBL/GenBank/DDBJ databases">
        <title>Genome sequence of Bacillus cereus 03BB102.</title>
        <authorList>
            <person name="Dodson R.J."/>
            <person name="Jackson P."/>
            <person name="Munk A.C."/>
            <person name="Brettin T."/>
            <person name="Bruce D."/>
            <person name="Detter C."/>
            <person name="Tapia R."/>
            <person name="Han C."/>
            <person name="Sutton G."/>
            <person name="Sims D."/>
        </authorList>
    </citation>
    <scope>NUCLEOTIDE SEQUENCE [LARGE SCALE GENOMIC DNA]</scope>
    <source>
        <strain>03BB102</strain>
    </source>
</reference>
<proteinExistence type="inferred from homology"/>
<name>RNH3_BACC3</name>
<feature type="chain" id="PRO_1000117700" description="Ribonuclease HIII">
    <location>
        <begin position="1"/>
        <end position="311"/>
    </location>
</feature>
<feature type="domain" description="RNase H type-2" evidence="2">
    <location>
        <begin position="95"/>
        <end position="311"/>
    </location>
</feature>
<feature type="binding site" evidence="1">
    <location>
        <position position="101"/>
    </location>
    <ligand>
        <name>a divalent metal cation</name>
        <dbReference type="ChEBI" id="CHEBI:60240"/>
    </ligand>
</feature>
<feature type="binding site" evidence="1">
    <location>
        <position position="102"/>
    </location>
    <ligand>
        <name>a divalent metal cation</name>
        <dbReference type="ChEBI" id="CHEBI:60240"/>
    </ligand>
</feature>
<feature type="binding site" evidence="1">
    <location>
        <position position="206"/>
    </location>
    <ligand>
        <name>a divalent metal cation</name>
        <dbReference type="ChEBI" id="CHEBI:60240"/>
    </ligand>
</feature>
<dbReference type="EC" id="3.1.26.4" evidence="1"/>
<dbReference type="EMBL" id="CP001407">
    <property type="protein sequence ID" value="ACO31145.1"/>
    <property type="molecule type" value="Genomic_DNA"/>
</dbReference>
<dbReference type="RefSeq" id="WP_000071580.1">
    <property type="nucleotide sequence ID" value="NZ_CP009318.1"/>
</dbReference>
<dbReference type="SMR" id="C1ETZ4"/>
<dbReference type="KEGG" id="bcx:BCA_4661"/>
<dbReference type="PATRIC" id="fig|572264.18.peg.4610"/>
<dbReference type="Proteomes" id="UP000002210">
    <property type="component" value="Chromosome"/>
</dbReference>
<dbReference type="GO" id="GO:0005737">
    <property type="term" value="C:cytoplasm"/>
    <property type="evidence" value="ECO:0007669"/>
    <property type="project" value="UniProtKB-SubCell"/>
</dbReference>
<dbReference type="GO" id="GO:0032299">
    <property type="term" value="C:ribonuclease H2 complex"/>
    <property type="evidence" value="ECO:0007669"/>
    <property type="project" value="TreeGrafter"/>
</dbReference>
<dbReference type="GO" id="GO:0000287">
    <property type="term" value="F:magnesium ion binding"/>
    <property type="evidence" value="ECO:0007669"/>
    <property type="project" value="UniProtKB-UniRule"/>
</dbReference>
<dbReference type="GO" id="GO:0003723">
    <property type="term" value="F:RNA binding"/>
    <property type="evidence" value="ECO:0007669"/>
    <property type="project" value="InterPro"/>
</dbReference>
<dbReference type="GO" id="GO:0004523">
    <property type="term" value="F:RNA-DNA hybrid ribonuclease activity"/>
    <property type="evidence" value="ECO:0007669"/>
    <property type="project" value="UniProtKB-UniRule"/>
</dbReference>
<dbReference type="GO" id="GO:0043137">
    <property type="term" value="P:DNA replication, removal of RNA primer"/>
    <property type="evidence" value="ECO:0007669"/>
    <property type="project" value="TreeGrafter"/>
</dbReference>
<dbReference type="GO" id="GO:0006298">
    <property type="term" value="P:mismatch repair"/>
    <property type="evidence" value="ECO:0007669"/>
    <property type="project" value="TreeGrafter"/>
</dbReference>
<dbReference type="CDD" id="cd06590">
    <property type="entry name" value="RNase_HII_bacteria_HIII_like"/>
    <property type="match status" value="1"/>
</dbReference>
<dbReference type="CDD" id="cd14796">
    <property type="entry name" value="RNAse_HIII_N"/>
    <property type="match status" value="1"/>
</dbReference>
<dbReference type="FunFam" id="3.30.310.10:FF:000016">
    <property type="entry name" value="Ribonuclease HIII"/>
    <property type="match status" value="1"/>
</dbReference>
<dbReference type="FunFam" id="3.30.420.10:FF:000047">
    <property type="entry name" value="Ribonuclease HIII"/>
    <property type="match status" value="1"/>
</dbReference>
<dbReference type="Gene3D" id="3.30.420.10">
    <property type="entry name" value="Ribonuclease H-like superfamily/Ribonuclease H"/>
    <property type="match status" value="1"/>
</dbReference>
<dbReference type="Gene3D" id="3.30.310.10">
    <property type="entry name" value="TATA-Binding Protein"/>
    <property type="match status" value="1"/>
</dbReference>
<dbReference type="HAMAP" id="MF_00053">
    <property type="entry name" value="RNase_HIII"/>
    <property type="match status" value="1"/>
</dbReference>
<dbReference type="InterPro" id="IPR001352">
    <property type="entry name" value="RNase_HII/HIII"/>
</dbReference>
<dbReference type="InterPro" id="IPR024567">
    <property type="entry name" value="RNase_HII/HIII_dom"/>
</dbReference>
<dbReference type="InterPro" id="IPR004641">
    <property type="entry name" value="RNase_HIII"/>
</dbReference>
<dbReference type="InterPro" id="IPR024568">
    <property type="entry name" value="RNase_HIII_N"/>
</dbReference>
<dbReference type="InterPro" id="IPR012337">
    <property type="entry name" value="RNaseH-like_sf"/>
</dbReference>
<dbReference type="InterPro" id="IPR036397">
    <property type="entry name" value="RNaseH_sf"/>
</dbReference>
<dbReference type="InterPro" id="IPR012295">
    <property type="entry name" value="TBP_dom_sf"/>
</dbReference>
<dbReference type="NCBIfam" id="TIGR00716">
    <property type="entry name" value="rnhC"/>
    <property type="match status" value="1"/>
</dbReference>
<dbReference type="PANTHER" id="PTHR10954:SF23">
    <property type="entry name" value="RIBONUCLEASE"/>
    <property type="match status" value="1"/>
</dbReference>
<dbReference type="PANTHER" id="PTHR10954">
    <property type="entry name" value="RIBONUCLEASE H2 SUBUNIT A"/>
    <property type="match status" value="1"/>
</dbReference>
<dbReference type="Pfam" id="PF11858">
    <property type="entry name" value="DUF3378"/>
    <property type="match status" value="1"/>
</dbReference>
<dbReference type="Pfam" id="PF01351">
    <property type="entry name" value="RNase_HII"/>
    <property type="match status" value="1"/>
</dbReference>
<dbReference type="PIRSF" id="PIRSF037748">
    <property type="entry name" value="RnhC"/>
    <property type="match status" value="1"/>
</dbReference>
<dbReference type="SUPFAM" id="SSF53098">
    <property type="entry name" value="Ribonuclease H-like"/>
    <property type="match status" value="1"/>
</dbReference>
<dbReference type="PROSITE" id="PS51975">
    <property type="entry name" value="RNASE_H_2"/>
    <property type="match status" value="1"/>
</dbReference>
<comment type="function">
    <text evidence="1">Endonuclease that specifically degrades the RNA of RNA-DNA hybrids.</text>
</comment>
<comment type="catalytic activity">
    <reaction evidence="1">
        <text>Endonucleolytic cleavage to 5'-phosphomonoester.</text>
        <dbReference type="EC" id="3.1.26.4"/>
    </reaction>
</comment>
<comment type="cofactor">
    <cofactor evidence="1">
        <name>Mn(2+)</name>
        <dbReference type="ChEBI" id="CHEBI:29035"/>
    </cofactor>
    <cofactor evidence="1">
        <name>Mg(2+)</name>
        <dbReference type="ChEBI" id="CHEBI:18420"/>
    </cofactor>
    <text evidence="1">Manganese or magnesium. Binds 1 divalent metal ion per monomer in the absence of substrate. May bind a second metal ion after substrate binding.</text>
</comment>
<comment type="subcellular location">
    <subcellularLocation>
        <location evidence="1">Cytoplasm</location>
    </subcellularLocation>
</comment>
<comment type="similarity">
    <text evidence="1">Belongs to the RNase HII family. RnhC subfamily.</text>
</comment>
<gene>
    <name evidence="1" type="primary">rnhC</name>
    <name type="ordered locus">BCA_4661</name>
</gene>
<organism>
    <name type="scientific">Bacillus cereus (strain 03BB102)</name>
    <dbReference type="NCBI Taxonomy" id="572264"/>
    <lineage>
        <taxon>Bacteria</taxon>
        <taxon>Bacillati</taxon>
        <taxon>Bacillota</taxon>
        <taxon>Bacilli</taxon>
        <taxon>Bacillales</taxon>
        <taxon>Bacillaceae</taxon>
        <taxon>Bacillus</taxon>
        <taxon>Bacillus cereus group</taxon>
    </lineage>
</organism>
<evidence type="ECO:0000255" key="1">
    <source>
        <dbReference type="HAMAP-Rule" id="MF_00053"/>
    </source>
</evidence>
<evidence type="ECO:0000255" key="2">
    <source>
        <dbReference type="PROSITE-ProRule" id="PRU01319"/>
    </source>
</evidence>
<accession>C1ETZ4</accession>
<sequence>MSNSIVIQTNSTVIEDMKQQYKHSLSPKTPQGGIFMAKVPSCTITAYKSGKVMFQGGRAEAEAARWQTVSQTPKTAVKKSVDSHRFAPPASIGTMSIVGSDEVGTGDFFGPMTVVAVYVDAKQIPLLKELGVKDSKNLNDEQITAIAKQLLHVVPYSSLVLHNEKYNELFDKGNNQGKLKALLHNKAITNLLAKMAPTKPEGVLIDQFTQPDTYYKYLAKQKQVQRENVYFATKGESVHLAVAAASILARYSFVKQFNELSKKAGMPLPKGAGKQVDIAAAKLIQKLGKERLPEFVKLHFANTEKAFRLLK</sequence>
<protein>
    <recommendedName>
        <fullName evidence="1">Ribonuclease HIII</fullName>
        <shortName evidence="1">RNase HIII</shortName>
        <ecNumber evidence="1">3.1.26.4</ecNumber>
    </recommendedName>
</protein>